<dbReference type="EMBL" id="AP006627">
    <property type="protein sequence ID" value="BAD62696.1"/>
    <property type="molecule type" value="Genomic_DNA"/>
</dbReference>
<dbReference type="RefSeq" id="WP_011245017.1">
    <property type="nucleotide sequence ID" value="NC_006582.1"/>
</dbReference>
<dbReference type="SMR" id="Q5WLQ9"/>
<dbReference type="STRING" id="66692.ABC0153"/>
<dbReference type="KEGG" id="bcl:ABC0153"/>
<dbReference type="eggNOG" id="COG0090">
    <property type="taxonomic scope" value="Bacteria"/>
</dbReference>
<dbReference type="HOGENOM" id="CLU_036235_2_1_9"/>
<dbReference type="OrthoDB" id="9778722at2"/>
<dbReference type="Proteomes" id="UP000001168">
    <property type="component" value="Chromosome"/>
</dbReference>
<dbReference type="GO" id="GO:0015934">
    <property type="term" value="C:large ribosomal subunit"/>
    <property type="evidence" value="ECO:0007669"/>
    <property type="project" value="InterPro"/>
</dbReference>
<dbReference type="GO" id="GO:0019843">
    <property type="term" value="F:rRNA binding"/>
    <property type="evidence" value="ECO:0007669"/>
    <property type="project" value="UniProtKB-UniRule"/>
</dbReference>
<dbReference type="GO" id="GO:0003735">
    <property type="term" value="F:structural constituent of ribosome"/>
    <property type="evidence" value="ECO:0007669"/>
    <property type="project" value="InterPro"/>
</dbReference>
<dbReference type="GO" id="GO:0016740">
    <property type="term" value="F:transferase activity"/>
    <property type="evidence" value="ECO:0007669"/>
    <property type="project" value="InterPro"/>
</dbReference>
<dbReference type="GO" id="GO:0002181">
    <property type="term" value="P:cytoplasmic translation"/>
    <property type="evidence" value="ECO:0007669"/>
    <property type="project" value="TreeGrafter"/>
</dbReference>
<dbReference type="FunFam" id="2.30.30.30:FF:000001">
    <property type="entry name" value="50S ribosomal protein L2"/>
    <property type="match status" value="1"/>
</dbReference>
<dbReference type="FunFam" id="2.40.50.140:FF:000003">
    <property type="entry name" value="50S ribosomal protein L2"/>
    <property type="match status" value="1"/>
</dbReference>
<dbReference type="FunFam" id="4.10.950.10:FF:000001">
    <property type="entry name" value="50S ribosomal protein L2"/>
    <property type="match status" value="1"/>
</dbReference>
<dbReference type="Gene3D" id="2.30.30.30">
    <property type="match status" value="1"/>
</dbReference>
<dbReference type="Gene3D" id="2.40.50.140">
    <property type="entry name" value="Nucleic acid-binding proteins"/>
    <property type="match status" value="1"/>
</dbReference>
<dbReference type="Gene3D" id="4.10.950.10">
    <property type="entry name" value="Ribosomal protein L2, domain 3"/>
    <property type="match status" value="1"/>
</dbReference>
<dbReference type="HAMAP" id="MF_01320_B">
    <property type="entry name" value="Ribosomal_uL2_B"/>
    <property type="match status" value="1"/>
</dbReference>
<dbReference type="InterPro" id="IPR012340">
    <property type="entry name" value="NA-bd_OB-fold"/>
</dbReference>
<dbReference type="InterPro" id="IPR014722">
    <property type="entry name" value="Rib_uL2_dom2"/>
</dbReference>
<dbReference type="InterPro" id="IPR002171">
    <property type="entry name" value="Ribosomal_uL2"/>
</dbReference>
<dbReference type="InterPro" id="IPR005880">
    <property type="entry name" value="Ribosomal_uL2_bac/org-type"/>
</dbReference>
<dbReference type="InterPro" id="IPR022669">
    <property type="entry name" value="Ribosomal_uL2_C"/>
</dbReference>
<dbReference type="InterPro" id="IPR022671">
    <property type="entry name" value="Ribosomal_uL2_CS"/>
</dbReference>
<dbReference type="InterPro" id="IPR014726">
    <property type="entry name" value="Ribosomal_uL2_dom3"/>
</dbReference>
<dbReference type="InterPro" id="IPR022666">
    <property type="entry name" value="Ribosomal_uL2_RNA-bd_dom"/>
</dbReference>
<dbReference type="InterPro" id="IPR008991">
    <property type="entry name" value="Translation_prot_SH3-like_sf"/>
</dbReference>
<dbReference type="NCBIfam" id="TIGR01171">
    <property type="entry name" value="rplB_bact"/>
    <property type="match status" value="1"/>
</dbReference>
<dbReference type="PANTHER" id="PTHR13691:SF5">
    <property type="entry name" value="LARGE RIBOSOMAL SUBUNIT PROTEIN UL2M"/>
    <property type="match status" value="1"/>
</dbReference>
<dbReference type="PANTHER" id="PTHR13691">
    <property type="entry name" value="RIBOSOMAL PROTEIN L2"/>
    <property type="match status" value="1"/>
</dbReference>
<dbReference type="Pfam" id="PF00181">
    <property type="entry name" value="Ribosomal_L2"/>
    <property type="match status" value="1"/>
</dbReference>
<dbReference type="Pfam" id="PF03947">
    <property type="entry name" value="Ribosomal_L2_C"/>
    <property type="match status" value="1"/>
</dbReference>
<dbReference type="PIRSF" id="PIRSF002158">
    <property type="entry name" value="Ribosomal_L2"/>
    <property type="match status" value="1"/>
</dbReference>
<dbReference type="SMART" id="SM01383">
    <property type="entry name" value="Ribosomal_L2"/>
    <property type="match status" value="1"/>
</dbReference>
<dbReference type="SMART" id="SM01382">
    <property type="entry name" value="Ribosomal_L2_C"/>
    <property type="match status" value="1"/>
</dbReference>
<dbReference type="SUPFAM" id="SSF50249">
    <property type="entry name" value="Nucleic acid-binding proteins"/>
    <property type="match status" value="1"/>
</dbReference>
<dbReference type="SUPFAM" id="SSF50104">
    <property type="entry name" value="Translation proteins SH3-like domain"/>
    <property type="match status" value="1"/>
</dbReference>
<dbReference type="PROSITE" id="PS00467">
    <property type="entry name" value="RIBOSOMAL_L2"/>
    <property type="match status" value="1"/>
</dbReference>
<reference key="1">
    <citation type="submission" date="2003-10" db="EMBL/GenBank/DDBJ databases">
        <title>The complete genome sequence of the alkaliphilic Bacillus clausii KSM-K16.</title>
        <authorList>
            <person name="Takaki Y."/>
            <person name="Kageyama Y."/>
            <person name="Shimamura S."/>
            <person name="Suzuki H."/>
            <person name="Nishi S."/>
            <person name="Hatada Y."/>
            <person name="Kawai S."/>
            <person name="Ito S."/>
            <person name="Horikoshi K."/>
        </authorList>
    </citation>
    <scope>NUCLEOTIDE SEQUENCE [LARGE SCALE GENOMIC DNA]</scope>
    <source>
        <strain>KSM-K16</strain>
    </source>
</reference>
<sequence>MAIKKYKPTSAGRRNMSVSDFAEITTDKPEKSLLAPLHKKGGRNNQGRLTVRHQGGGHKRQYRVIDFKRNKDGIPGRVATIEYDPNRSANIALINYADGEKRYILAPKGLTVGTVIVSGPDADIKTGNALPLANIPVGTVIHNIELRPGKGGQLVRSAGTEAQLLGKEGDYALVRLNSGETRYILSTCRATIGQVGNVEHELINIGKAGRSRWKGIRPTVRGSVMNPNDHPHGGGEGKAPIGRPSPMSPWGKPTLGYKTRKKNKHSDKYIVRRRKK</sequence>
<comment type="function">
    <text evidence="1">One of the primary rRNA binding proteins. Required for association of the 30S and 50S subunits to form the 70S ribosome, for tRNA binding and peptide bond formation. It has been suggested to have peptidyltransferase activity; this is somewhat controversial. Makes several contacts with the 16S rRNA in the 70S ribosome.</text>
</comment>
<comment type="subunit">
    <text evidence="1">Part of the 50S ribosomal subunit. Forms a bridge to the 30S subunit in the 70S ribosome.</text>
</comment>
<comment type="similarity">
    <text evidence="1">Belongs to the universal ribosomal protein uL2 family.</text>
</comment>
<protein>
    <recommendedName>
        <fullName evidence="1">Large ribosomal subunit protein uL2</fullName>
    </recommendedName>
    <alternativeName>
        <fullName evidence="3">50S ribosomal protein L2</fullName>
    </alternativeName>
</protein>
<feature type="chain" id="PRO_0000237151" description="Large ribosomal subunit protein uL2">
    <location>
        <begin position="1"/>
        <end position="276"/>
    </location>
</feature>
<feature type="region of interest" description="Disordered" evidence="2">
    <location>
        <begin position="35"/>
        <end position="55"/>
    </location>
</feature>
<feature type="region of interest" description="Disordered" evidence="2">
    <location>
        <begin position="222"/>
        <end position="276"/>
    </location>
</feature>
<feature type="compositionally biased region" description="Basic residues" evidence="2">
    <location>
        <begin position="258"/>
        <end position="276"/>
    </location>
</feature>
<gene>
    <name evidence="1" type="primary">rplB</name>
    <name type="ordered locus">ABC0153</name>
</gene>
<evidence type="ECO:0000255" key="1">
    <source>
        <dbReference type="HAMAP-Rule" id="MF_01320"/>
    </source>
</evidence>
<evidence type="ECO:0000256" key="2">
    <source>
        <dbReference type="SAM" id="MobiDB-lite"/>
    </source>
</evidence>
<evidence type="ECO:0000305" key="3"/>
<name>RL2_SHOC1</name>
<accession>Q5WLQ9</accession>
<proteinExistence type="inferred from homology"/>
<keyword id="KW-1185">Reference proteome</keyword>
<keyword id="KW-0687">Ribonucleoprotein</keyword>
<keyword id="KW-0689">Ribosomal protein</keyword>
<keyword id="KW-0694">RNA-binding</keyword>
<keyword id="KW-0699">rRNA-binding</keyword>
<organism>
    <name type="scientific">Shouchella clausii (strain KSM-K16)</name>
    <name type="common">Alkalihalobacillus clausii</name>
    <dbReference type="NCBI Taxonomy" id="66692"/>
    <lineage>
        <taxon>Bacteria</taxon>
        <taxon>Bacillati</taxon>
        <taxon>Bacillota</taxon>
        <taxon>Bacilli</taxon>
        <taxon>Bacillales</taxon>
        <taxon>Bacillaceae</taxon>
        <taxon>Shouchella</taxon>
    </lineage>
</organism>